<name>YAFU_ECOLI</name>
<dbReference type="EMBL" id="U70214">
    <property type="protein sequence ID" value="AAB08640.1"/>
    <property type="molecule type" value="Genomic_DNA"/>
</dbReference>
<dbReference type="EMBL" id="U00096">
    <property type="status" value="NOT_ANNOTATED_CDS"/>
    <property type="molecule type" value="Genomic_DNA"/>
</dbReference>
<dbReference type="EMBL" id="AP009048">
    <property type="protein sequence ID" value="BAE76046.1"/>
    <property type="molecule type" value="Genomic_DNA"/>
</dbReference>
<dbReference type="PIR" id="C64746">
    <property type="entry name" value="C64746"/>
</dbReference>
<dbReference type="SMR" id="P77354"/>
<dbReference type="BioGRID" id="4259759">
    <property type="interactions" value="17"/>
</dbReference>
<dbReference type="FunCoup" id="P77354">
    <property type="interactions" value="5"/>
</dbReference>
<dbReference type="KEGG" id="ecj:JW0207"/>
<dbReference type="KEGG" id="ecoc:C3026_01025"/>
<dbReference type="PATRIC" id="fig|83333.103.peg.968"/>
<dbReference type="EchoBASE" id="EB3117"/>
<dbReference type="eggNOG" id="COG4104">
    <property type="taxonomic scope" value="Bacteria"/>
</dbReference>
<dbReference type="HOGENOM" id="CLU_2141953_0_0_6"/>
<dbReference type="InParanoid" id="P77354"/>
<dbReference type="Proteomes" id="UP000000625">
    <property type="component" value="Chromosome"/>
</dbReference>
<dbReference type="GO" id="GO:0005886">
    <property type="term" value="C:plasma membrane"/>
    <property type="evidence" value="ECO:0000314"/>
    <property type="project" value="EcoCyc"/>
</dbReference>
<organism>
    <name type="scientific">Escherichia coli (strain K12)</name>
    <dbReference type="NCBI Taxonomy" id="83333"/>
    <lineage>
        <taxon>Bacteria</taxon>
        <taxon>Pseudomonadati</taxon>
        <taxon>Pseudomonadota</taxon>
        <taxon>Gammaproteobacteria</taxon>
        <taxon>Enterobacterales</taxon>
        <taxon>Enterobacteriaceae</taxon>
        <taxon>Escherichia</taxon>
    </lineage>
</organism>
<sequence length="112" mass="12136">MSSERDLVNFLGDFSMDVAKAVIAGGVATAIGSLASFACVSFGFPVILVGGAILLTGIVCTVVLNEIDAQCHLSEKLKYAIRDGLKRQQELDKWKRENMTPFMYVLNTPPVI</sequence>
<comment type="subcellular location">
    <subcellularLocation>
        <location evidence="2">Cell inner membrane</location>
        <topology>Multi-pass membrane protein</topology>
    </subcellularLocation>
    <text evidence="2">When overexpressed using vectors that provide a promoter and ribosome binding site (PubMed:15919996).</text>
</comment>
<comment type="caution">
    <text evidence="3">Could be the product of a pseudogene; is missing 186 N-terminal amino acids compared to its orthologs.</text>
</comment>
<keyword id="KW-0997">Cell inner membrane</keyword>
<keyword id="KW-1003">Cell membrane</keyword>
<keyword id="KW-0472">Membrane</keyword>
<keyword id="KW-1185">Reference proteome</keyword>
<keyword id="KW-0812">Transmembrane</keyword>
<keyword id="KW-1133">Transmembrane helix</keyword>
<accession>P77354</accession>
<accession>Q2MCG0</accession>
<feature type="chain" id="PRO_0000168543" description="Putative inner membrane protein YafU">
    <location>
        <begin position="1"/>
        <end position="112"/>
    </location>
</feature>
<feature type="topological domain" description="Cytoplasmic" evidence="1">
    <location>
        <begin position="1"/>
        <end position="21"/>
    </location>
</feature>
<feature type="transmembrane region" description="Helical" evidence="1">
    <location>
        <begin position="22"/>
        <end position="42"/>
    </location>
</feature>
<feature type="topological domain" description="Periplasmic" evidence="1">
    <location>
        <position position="43"/>
    </location>
</feature>
<feature type="transmembrane region" description="Helical" evidence="1">
    <location>
        <begin position="44"/>
        <end position="64"/>
    </location>
</feature>
<feature type="topological domain" description="Cytoplasmic" evidence="1 2">
    <location>
        <begin position="65"/>
        <end position="112"/>
    </location>
</feature>
<evidence type="ECO:0000255" key="1"/>
<evidence type="ECO:0000269" key="2">
    <source>
    </source>
</evidence>
<evidence type="ECO:0000305" key="3"/>
<gene>
    <name type="primary">yafU</name>
    <name type="ordered locus">b0218</name>
    <name type="ordered locus">JW0207</name>
</gene>
<reference key="1">
    <citation type="submission" date="1997-01" db="EMBL/GenBank/DDBJ databases">
        <title>Sequence of minutes 4-25 of Escherichia coli.</title>
        <authorList>
            <person name="Chung E."/>
            <person name="Allen E."/>
            <person name="Araujo R."/>
            <person name="Aparicio A.M."/>
            <person name="Davis K."/>
            <person name="Duncan M."/>
            <person name="Federspiel N."/>
            <person name="Hyman R."/>
            <person name="Kalman S."/>
            <person name="Komp C."/>
            <person name="Kurdi O."/>
            <person name="Lew H."/>
            <person name="Lin D."/>
            <person name="Namath A."/>
            <person name="Oefner P."/>
            <person name="Roberts D."/>
            <person name="Schramm S."/>
            <person name="Davis R.W."/>
        </authorList>
    </citation>
    <scope>NUCLEOTIDE SEQUENCE [LARGE SCALE GENOMIC DNA]</scope>
    <source>
        <strain>K12 / MG1655 / ATCC 47076</strain>
    </source>
</reference>
<reference key="2">
    <citation type="journal article" date="1997" name="Science">
        <title>The complete genome sequence of Escherichia coli K-12.</title>
        <authorList>
            <person name="Blattner F.R."/>
            <person name="Plunkett G. III"/>
            <person name="Bloch C.A."/>
            <person name="Perna N.T."/>
            <person name="Burland V."/>
            <person name="Riley M."/>
            <person name="Collado-Vides J."/>
            <person name="Glasner J.D."/>
            <person name="Rode C.K."/>
            <person name="Mayhew G.F."/>
            <person name="Gregor J."/>
            <person name="Davis N.W."/>
            <person name="Kirkpatrick H.A."/>
            <person name="Goeden M.A."/>
            <person name="Rose D.J."/>
            <person name="Mau B."/>
            <person name="Shao Y."/>
        </authorList>
    </citation>
    <scope>NUCLEOTIDE SEQUENCE [LARGE SCALE GENOMIC DNA]</scope>
    <source>
        <strain>K12 / MG1655 / ATCC 47076</strain>
    </source>
</reference>
<reference key="3">
    <citation type="journal article" date="2006" name="Mol. Syst. Biol.">
        <title>Highly accurate genome sequences of Escherichia coli K-12 strains MG1655 and W3110.</title>
        <authorList>
            <person name="Hayashi K."/>
            <person name="Morooka N."/>
            <person name="Yamamoto Y."/>
            <person name="Fujita K."/>
            <person name="Isono K."/>
            <person name="Choi S."/>
            <person name="Ohtsubo E."/>
            <person name="Baba T."/>
            <person name="Wanner B.L."/>
            <person name="Mori H."/>
            <person name="Horiuchi T."/>
        </authorList>
    </citation>
    <scope>NUCLEOTIDE SEQUENCE [LARGE SCALE GENOMIC DNA]</scope>
    <source>
        <strain>K12 / W3110 / ATCC 27325 / DSM 5911</strain>
    </source>
</reference>
<reference key="4">
    <citation type="journal article" date="2005" name="Science">
        <title>Global topology analysis of the Escherichia coli inner membrane proteome.</title>
        <authorList>
            <person name="Daley D.O."/>
            <person name="Rapp M."/>
            <person name="Granseth E."/>
            <person name="Melen K."/>
            <person name="Drew D."/>
            <person name="von Heijne G."/>
        </authorList>
    </citation>
    <scope>SUBCELLULAR LOCATION</scope>
    <scope>TOPOLOGY [LARGE SCALE ANALYSIS]</scope>
    <source>
        <strain>K12 / MG1655 / ATCC 47076</strain>
    </source>
</reference>
<protein>
    <recommendedName>
        <fullName>Putative inner membrane protein YafU</fullName>
    </recommendedName>
</protein>
<proteinExistence type="uncertain"/>